<evidence type="ECO:0000250" key="1">
    <source>
        <dbReference type="UniProtKB" id="P0AE22"/>
    </source>
</evidence>
<evidence type="ECO:0000255" key="2"/>
<evidence type="ECO:0000269" key="3">
    <source>
    </source>
</evidence>
<evidence type="ECO:0000312" key="4">
    <source>
        <dbReference type="EMBL" id="CAR41704.1"/>
    </source>
</evidence>
<organism>
    <name type="scientific">Proteus mirabilis (strain HI4320)</name>
    <dbReference type="NCBI Taxonomy" id="529507"/>
    <lineage>
        <taxon>Bacteria</taxon>
        <taxon>Pseudomonadati</taxon>
        <taxon>Pseudomonadota</taxon>
        <taxon>Gammaproteobacteria</taxon>
        <taxon>Enterobacterales</taxon>
        <taxon>Morganellaceae</taxon>
        <taxon>Proteus</taxon>
    </lineage>
</organism>
<sequence length="237" mass="26418">MRKVTLTLSAIALALSLNGAAMAKVHMPEVVSPGVTVTELAHQQPIKWVSVAEIEKSLEGQAPMAVGFDIDDTVLFSSPGFYRGKLEYSPNDFSYLKNPEFWEKMNNEWDKFSMPKQVGIDLVQMHLKRGDTVYFITGRTQTKTETVTKYVQEGLNIPADKMQPVIFAGDQPGANNKVSWMRDHKLKIYYGDADADIAAADELNIRGIRILRAANSSYQPLPKAGQFGEEVVINSEY</sequence>
<feature type="signal peptide" evidence="2">
    <location>
        <begin position="1"/>
        <end position="23"/>
    </location>
</feature>
<feature type="chain" id="PRO_0000415228" description="Class B acid phosphatase" evidence="2">
    <location>
        <begin position="24"/>
        <end position="237"/>
    </location>
</feature>
<feature type="active site" description="Nucleophile" evidence="1">
    <location>
        <position position="69"/>
    </location>
</feature>
<feature type="active site" description="Proton donor" evidence="1">
    <location>
        <position position="71"/>
    </location>
</feature>
<feature type="binding site" evidence="1">
    <location>
        <position position="69"/>
    </location>
    <ligand>
        <name>Mg(2+)</name>
        <dbReference type="ChEBI" id="CHEBI:18420"/>
    </ligand>
</feature>
<feature type="binding site" evidence="1">
    <location>
        <position position="71"/>
    </location>
    <ligand>
        <name>Mg(2+)</name>
        <dbReference type="ChEBI" id="CHEBI:18420"/>
    </ligand>
</feature>
<feature type="binding site" evidence="1">
    <location>
        <begin position="137"/>
        <end position="138"/>
    </location>
    <ligand>
        <name>substrate</name>
    </ligand>
</feature>
<feature type="binding site" evidence="1">
    <location>
        <position position="177"/>
    </location>
    <ligand>
        <name>substrate</name>
    </ligand>
</feature>
<feature type="binding site" evidence="1">
    <location>
        <position position="192"/>
    </location>
    <ligand>
        <name>Mg(2+)</name>
        <dbReference type="ChEBI" id="CHEBI:18420"/>
    </ligand>
</feature>
<gene>
    <name evidence="4" type="primary">aphA</name>
    <name type="ordered locus">PMI0729</name>
</gene>
<comment type="function">
    <text evidence="1">Dephosphorylates several organic phosphate monoesters. Also has a phosphotransferase activity catalyzing the transfer of low-energy phosphate groups from organic phosphate monoesters to free hydroxyl groups of various organic compounds (By similarity).</text>
</comment>
<comment type="catalytic activity">
    <reaction evidence="1">
        <text>a phosphate monoester + H2O = an alcohol + phosphate</text>
        <dbReference type="Rhea" id="RHEA:15017"/>
        <dbReference type="ChEBI" id="CHEBI:15377"/>
        <dbReference type="ChEBI" id="CHEBI:30879"/>
        <dbReference type="ChEBI" id="CHEBI:43474"/>
        <dbReference type="ChEBI" id="CHEBI:67140"/>
        <dbReference type="EC" id="3.1.3.2"/>
    </reaction>
</comment>
<comment type="cofactor">
    <cofactor evidence="1">
        <name>Mg(2+)</name>
        <dbReference type="ChEBI" id="CHEBI:18420"/>
    </cofactor>
    <text evidence="1">Binds 1 Mg(2+) ion per subunit.</text>
</comment>
<comment type="subunit">
    <text evidence="1">Homotetramer.</text>
</comment>
<comment type="subcellular location">
    <subcellularLocation>
        <location evidence="1">Periplasm</location>
    </subcellularLocation>
</comment>
<comment type="similarity">
    <text evidence="1">Belongs to the class B bacterial acid phosphatase family.</text>
</comment>
<reference evidence="4" key="1">
    <citation type="journal article" date="2008" name="J. Bacteriol.">
        <title>Complete genome sequence of uropathogenic Proteus mirabilis, a master of both adherence and motility.</title>
        <authorList>
            <person name="Pearson M.M."/>
            <person name="Sebaihia M."/>
            <person name="Churcher C."/>
            <person name="Quail M.A."/>
            <person name="Seshasayee A.S."/>
            <person name="Luscombe N.M."/>
            <person name="Abdellah Z."/>
            <person name="Arrosmith C."/>
            <person name="Atkin B."/>
            <person name="Chillingworth T."/>
            <person name="Hauser H."/>
            <person name="Jagels K."/>
            <person name="Moule S."/>
            <person name="Mungall K."/>
            <person name="Norbertczak H."/>
            <person name="Rabbinowitsch E."/>
            <person name="Walker D."/>
            <person name="Whithead S."/>
            <person name="Thomson N.R."/>
            <person name="Rather P.N."/>
            <person name="Parkhill J."/>
            <person name="Mobley H.L.T."/>
        </authorList>
    </citation>
    <scope>NUCLEOTIDE SEQUENCE [LARGE SCALE GENOMIC DNA]</scope>
    <source>
        <strain evidence="3">HI4320</strain>
    </source>
</reference>
<proteinExistence type="inferred from homology"/>
<protein>
    <recommendedName>
        <fullName evidence="1 4">Class B acid phosphatase</fullName>
        <shortName evidence="1">CBAP</shortName>
        <ecNumber evidence="1 4">3.1.3.2</ecNumber>
    </recommendedName>
</protein>
<dbReference type="EC" id="3.1.3.2" evidence="1 4"/>
<dbReference type="EMBL" id="AM942759">
    <property type="protein sequence ID" value="CAR41704.1"/>
    <property type="molecule type" value="Genomic_DNA"/>
</dbReference>
<dbReference type="RefSeq" id="WP_004247637.1">
    <property type="nucleotide sequence ID" value="NC_010554.1"/>
</dbReference>
<dbReference type="SMR" id="B4ET41"/>
<dbReference type="EnsemblBacteria" id="CAR41704">
    <property type="protein sequence ID" value="CAR41704"/>
    <property type="gene ID" value="PMI0729"/>
</dbReference>
<dbReference type="GeneID" id="6803528"/>
<dbReference type="KEGG" id="pmr:PMI0729"/>
<dbReference type="eggNOG" id="COG3700">
    <property type="taxonomic scope" value="Bacteria"/>
</dbReference>
<dbReference type="HOGENOM" id="CLU_081496_0_0_6"/>
<dbReference type="Proteomes" id="UP000008319">
    <property type="component" value="Chromosome"/>
</dbReference>
<dbReference type="GO" id="GO:0030288">
    <property type="term" value="C:outer membrane-bounded periplasmic space"/>
    <property type="evidence" value="ECO:0007669"/>
    <property type="project" value="InterPro"/>
</dbReference>
<dbReference type="GO" id="GO:0003993">
    <property type="term" value="F:acid phosphatase activity"/>
    <property type="evidence" value="ECO:0007669"/>
    <property type="project" value="UniProtKB-EC"/>
</dbReference>
<dbReference type="GO" id="GO:0046872">
    <property type="term" value="F:metal ion binding"/>
    <property type="evidence" value="ECO:0007669"/>
    <property type="project" value="UniProtKB-KW"/>
</dbReference>
<dbReference type="Gene3D" id="3.40.50.1000">
    <property type="entry name" value="HAD superfamily/HAD-like"/>
    <property type="match status" value="1"/>
</dbReference>
<dbReference type="InterPro" id="IPR005519">
    <property type="entry name" value="Acid_phosphat_B-like"/>
</dbReference>
<dbReference type="InterPro" id="IPR036412">
    <property type="entry name" value="HAD-like_sf"/>
</dbReference>
<dbReference type="InterPro" id="IPR010025">
    <property type="entry name" value="HAD-SF_ppase_IIIB_AphA"/>
</dbReference>
<dbReference type="InterPro" id="IPR023214">
    <property type="entry name" value="HAD_sf"/>
</dbReference>
<dbReference type="NCBIfam" id="TIGR01672">
    <property type="entry name" value="AphA"/>
    <property type="match status" value="1"/>
</dbReference>
<dbReference type="Pfam" id="PF03767">
    <property type="entry name" value="Acid_phosphat_B"/>
    <property type="match status" value="1"/>
</dbReference>
<dbReference type="PIRSF" id="PIRSF017818">
    <property type="entry name" value="Acid_Ptase_B"/>
    <property type="match status" value="1"/>
</dbReference>
<dbReference type="SFLD" id="SFLDG01127">
    <property type="entry name" value="C1.3:_Acid_Phosphatase_Like"/>
    <property type="match status" value="1"/>
</dbReference>
<dbReference type="SFLD" id="SFLDS00003">
    <property type="entry name" value="Haloacid_Dehalogenase"/>
    <property type="match status" value="1"/>
</dbReference>
<dbReference type="SUPFAM" id="SSF56784">
    <property type="entry name" value="HAD-like"/>
    <property type="match status" value="1"/>
</dbReference>
<name>APHA_PROMH</name>
<accession>B4ET41</accession>
<keyword id="KW-0378">Hydrolase</keyword>
<keyword id="KW-0460">Magnesium</keyword>
<keyword id="KW-0479">Metal-binding</keyword>
<keyword id="KW-0574">Periplasm</keyword>
<keyword id="KW-1185">Reference proteome</keyword>
<keyword id="KW-0732">Signal</keyword>